<organism>
    <name type="scientific">Pseudomonas aeruginosa (strain ATCC 15692 / DSM 22644 / CIP 104116 / JCM 14847 / LMG 12228 / 1C / PRS 101 / PAO1)</name>
    <dbReference type="NCBI Taxonomy" id="208964"/>
    <lineage>
        <taxon>Bacteria</taxon>
        <taxon>Pseudomonadati</taxon>
        <taxon>Pseudomonadota</taxon>
        <taxon>Gammaproteobacteria</taxon>
        <taxon>Pseudomonadales</taxon>
        <taxon>Pseudomonadaceae</taxon>
        <taxon>Pseudomonas</taxon>
    </lineage>
</organism>
<keyword id="KW-0067">ATP-binding</keyword>
<keyword id="KW-0143">Chaperone</keyword>
<keyword id="KW-0547">Nucleotide-binding</keyword>
<keyword id="KW-1185">Reference proteome</keyword>
<feature type="chain" id="PRO_0000160568" description="ATP-dependent protease ATP-binding subunit-like protein AmiB">
    <location>
        <begin position="1"/>
        <end position="371"/>
    </location>
</feature>
<feature type="binding site" evidence="1">
    <location>
        <begin position="96"/>
        <end position="103"/>
    </location>
    <ligand>
        <name>ATP</name>
        <dbReference type="ChEBI" id="CHEBI:30616"/>
    </ligand>
</feature>
<feature type="sequence conflict" description="In Ref. 1; CAA54405." evidence="2" ref="1">
    <original>R</original>
    <variation>H</variation>
    <location>
        <position position="43"/>
    </location>
</feature>
<feature type="sequence conflict" description="In Ref. 1; CAA54405." evidence="2" ref="1">
    <original>D</original>
    <variation>E</variation>
    <location>
        <position position="65"/>
    </location>
</feature>
<feature type="sequence conflict" description="In Ref. 1; CAA54405." evidence="2" ref="1">
    <original>T</original>
    <variation>I</variation>
    <location>
        <position position="356"/>
    </location>
</feature>
<gene>
    <name type="primary">amiB</name>
    <name type="ordered locus">PA3365</name>
</gene>
<dbReference type="EMBL" id="X77160">
    <property type="protein sequence ID" value="CAA54405.1"/>
    <property type="molecule type" value="Genomic_DNA"/>
</dbReference>
<dbReference type="EMBL" id="AE004091">
    <property type="protein sequence ID" value="AAG06753.1"/>
    <property type="molecule type" value="Genomic_DNA"/>
</dbReference>
<dbReference type="PIR" id="D83226">
    <property type="entry name" value="D83226"/>
</dbReference>
<dbReference type="PIR" id="S44145">
    <property type="entry name" value="S44145"/>
</dbReference>
<dbReference type="RefSeq" id="NP_252055.1">
    <property type="nucleotide sequence ID" value="NC_002516.2"/>
</dbReference>
<dbReference type="RefSeq" id="WP_003113130.1">
    <property type="nucleotide sequence ID" value="NZ_QZGE01000017.1"/>
</dbReference>
<dbReference type="SMR" id="Q51416"/>
<dbReference type="STRING" id="208964.PA3365"/>
<dbReference type="PaxDb" id="208964-PA3365"/>
<dbReference type="GeneID" id="877799"/>
<dbReference type="KEGG" id="pae:PA3365"/>
<dbReference type="PATRIC" id="fig|208964.12.peg.3524"/>
<dbReference type="PseudoCAP" id="PA3365"/>
<dbReference type="HOGENOM" id="CLU_005070_9_1_6"/>
<dbReference type="InParanoid" id="Q51416"/>
<dbReference type="OrthoDB" id="9803641at2"/>
<dbReference type="PhylomeDB" id="Q51416"/>
<dbReference type="BioCyc" id="PAER208964:G1FZ6-3429-MONOMER"/>
<dbReference type="SABIO-RK" id="Q51416"/>
<dbReference type="Proteomes" id="UP000002438">
    <property type="component" value="Chromosome"/>
</dbReference>
<dbReference type="GO" id="GO:0005737">
    <property type="term" value="C:cytoplasm"/>
    <property type="evidence" value="ECO:0000318"/>
    <property type="project" value="GO_Central"/>
</dbReference>
<dbReference type="GO" id="GO:0005524">
    <property type="term" value="F:ATP binding"/>
    <property type="evidence" value="ECO:0007669"/>
    <property type="project" value="UniProtKB-KW"/>
</dbReference>
<dbReference type="GO" id="GO:0016887">
    <property type="term" value="F:ATP hydrolysis activity"/>
    <property type="evidence" value="ECO:0000318"/>
    <property type="project" value="GO_Central"/>
</dbReference>
<dbReference type="GO" id="GO:0034605">
    <property type="term" value="P:cellular response to heat"/>
    <property type="evidence" value="ECO:0000318"/>
    <property type="project" value="GO_Central"/>
</dbReference>
<dbReference type="CDD" id="cd19499">
    <property type="entry name" value="RecA-like_ClpB_Hsp104-like"/>
    <property type="match status" value="1"/>
</dbReference>
<dbReference type="Gene3D" id="1.10.8.60">
    <property type="match status" value="1"/>
</dbReference>
<dbReference type="Gene3D" id="3.40.50.300">
    <property type="entry name" value="P-loop containing nucleotide triphosphate hydrolases"/>
    <property type="match status" value="1"/>
</dbReference>
<dbReference type="InterPro" id="IPR003593">
    <property type="entry name" value="AAA+_ATPase"/>
</dbReference>
<dbReference type="InterPro" id="IPR003959">
    <property type="entry name" value="ATPase_AAA_core"/>
</dbReference>
<dbReference type="InterPro" id="IPR019489">
    <property type="entry name" value="Clp_ATPase_C"/>
</dbReference>
<dbReference type="InterPro" id="IPR001270">
    <property type="entry name" value="ClpA/B"/>
</dbReference>
<dbReference type="InterPro" id="IPR050130">
    <property type="entry name" value="ClpA_ClpB"/>
</dbReference>
<dbReference type="InterPro" id="IPR027417">
    <property type="entry name" value="P-loop_NTPase"/>
</dbReference>
<dbReference type="PANTHER" id="PTHR11638">
    <property type="entry name" value="ATP-DEPENDENT CLP PROTEASE"/>
    <property type="match status" value="1"/>
</dbReference>
<dbReference type="PANTHER" id="PTHR11638:SF18">
    <property type="entry name" value="HEAT SHOCK PROTEIN 104"/>
    <property type="match status" value="1"/>
</dbReference>
<dbReference type="Pfam" id="PF07724">
    <property type="entry name" value="AAA_2"/>
    <property type="match status" value="1"/>
</dbReference>
<dbReference type="Pfam" id="PF10431">
    <property type="entry name" value="ClpB_D2-small"/>
    <property type="match status" value="1"/>
</dbReference>
<dbReference type="PRINTS" id="PR00300">
    <property type="entry name" value="CLPPROTEASEA"/>
</dbReference>
<dbReference type="SMART" id="SM00382">
    <property type="entry name" value="AAA"/>
    <property type="match status" value="1"/>
</dbReference>
<dbReference type="SMART" id="SM01086">
    <property type="entry name" value="ClpB_D2-small"/>
    <property type="match status" value="1"/>
</dbReference>
<dbReference type="SUPFAM" id="SSF52540">
    <property type="entry name" value="P-loop containing nucleoside triphosphate hydrolases"/>
    <property type="match status" value="1"/>
</dbReference>
<comment type="function">
    <text>Unlikely to encode a regulatory protein. Has ATPase activity. AmiB and AmiS may act jointly into a two component ABC transporter system.</text>
</comment>
<comment type="cofactor">
    <cofactor>
        <name>Mg(2+)</name>
        <dbReference type="ChEBI" id="CHEBI:18420"/>
    </cofactor>
</comment>
<comment type="similarity">
    <text evidence="2">Belongs to the ClpX chaperone family.</text>
</comment>
<accession>Q51416</accession>
<evidence type="ECO:0000255" key="1"/>
<evidence type="ECO:0000305" key="2"/>
<sequence>MPFLSDMLDQSRRQQDEEQALARENLAEASLLQAHLSHRSALRSRFRFDPAAVMDCLRAEVLGQDPALQAVEDMLKVVRADIADPRRPLFSALFLGPTGVGKTEIVRALARALHGDAEGFCRVDMNTLSQEHYAAALTGAPPGYVGAKEGTTLLEQDKLDGSPGRPGIVLFDELEKASPEVVHALLNVLDNGLLRVASGERTYHFRNTLVFMTSNLCAHEIQRYDERRQRLPWRLLPVGGERRRRDIDGMVRARLLKTFSPEFVNRLDSVVTFNWIERDVVARLVELEVQRLNRRLEKHRCRLEATPEVLAKIARAGFDRQFGARALRRSVRHHLEVPLAEHLLDHHQPGDGNCTTYLASLEHERVRFVRR</sequence>
<proteinExistence type="inferred from homology"/>
<protein>
    <recommendedName>
        <fullName>ATP-dependent protease ATP-binding subunit-like protein AmiB</fullName>
    </recommendedName>
</protein>
<reference key="1">
    <citation type="journal article" date="1995" name="J. Biol. Chem.">
        <title>Identification of two new genes in the Pseudomonas aeruginosa amidase operon, encoding an ATPase (AmiB) and a putative integral membrane protein (AmiS).</title>
        <authorList>
            <person name="Wilson S.A."/>
            <person name="Williams R.J."/>
            <person name="Pearl L.H."/>
            <person name="Drew R.E."/>
        </authorList>
    </citation>
    <scope>NUCLEOTIDE SEQUENCE [GENOMIC DNA]</scope>
    <source>
        <strain>PAC1</strain>
    </source>
</reference>
<reference key="2">
    <citation type="journal article" date="2000" name="Nature">
        <title>Complete genome sequence of Pseudomonas aeruginosa PAO1, an opportunistic pathogen.</title>
        <authorList>
            <person name="Stover C.K."/>
            <person name="Pham X.-Q.T."/>
            <person name="Erwin A.L."/>
            <person name="Mizoguchi S.D."/>
            <person name="Warrener P."/>
            <person name="Hickey M.J."/>
            <person name="Brinkman F.S.L."/>
            <person name="Hufnagle W.O."/>
            <person name="Kowalik D.J."/>
            <person name="Lagrou M."/>
            <person name="Garber R.L."/>
            <person name="Goltry L."/>
            <person name="Tolentino E."/>
            <person name="Westbrock-Wadman S."/>
            <person name="Yuan Y."/>
            <person name="Brody L.L."/>
            <person name="Coulter S.N."/>
            <person name="Folger K.R."/>
            <person name="Kas A."/>
            <person name="Larbig K."/>
            <person name="Lim R.M."/>
            <person name="Smith K.A."/>
            <person name="Spencer D.H."/>
            <person name="Wong G.K.-S."/>
            <person name="Wu Z."/>
            <person name="Paulsen I.T."/>
            <person name="Reizer J."/>
            <person name="Saier M.H. Jr."/>
            <person name="Hancock R.E.W."/>
            <person name="Lory S."/>
            <person name="Olson M.V."/>
        </authorList>
    </citation>
    <scope>NUCLEOTIDE SEQUENCE [LARGE SCALE GENOMIC DNA]</scope>
    <source>
        <strain>ATCC 15692 / DSM 22644 / CIP 104116 / JCM 14847 / LMG 12228 / 1C / PRS 101 / PAO1</strain>
    </source>
</reference>
<reference key="3">
    <citation type="journal article" date="1995" name="J. Bacteriol.">
        <title>Transcriptional analysis of the amidase operon from Pseudomonas aeruginosa.</title>
        <authorList>
            <person name="Wilson S.A."/>
            <person name="Drew R.E."/>
        </authorList>
    </citation>
    <scope>NUCLEOTIDE SEQUENCE [GENOMIC DNA] OF 1-13</scope>
    <source>
        <strain>PAC1</strain>
    </source>
</reference>
<name>AMIB_PSEAE</name>